<accession>A7Z0H2</accession>
<sequence>MEVTDVRLRRVNTDGRMRAIASITLDHEFVVHDIRVIDGNNGLFVAMPSKRTPDGEFRDIAHPINSSTRGKIQDAVLNEYHRLGDSEALEYEEAGAS</sequence>
<evidence type="ECO:0000255" key="1">
    <source>
        <dbReference type="HAMAP-Rule" id="MF_00819"/>
    </source>
</evidence>
<gene>
    <name evidence="1" type="primary">spoVG</name>
    <name type="ordered locus">RBAM_000580</name>
</gene>
<name>SP5G_BACVZ</name>
<comment type="function">
    <text evidence="1">Essential for sporulation. Interferes with or is a negative regulator of the pathway leading to asymmetric septation.</text>
</comment>
<comment type="similarity">
    <text evidence="1">Belongs to the SpoVG family.</text>
</comment>
<organism>
    <name type="scientific">Bacillus velezensis (strain DSM 23117 / BGSC 10A6 / LMG 26770 / FZB42)</name>
    <name type="common">Bacillus amyloliquefaciens subsp. plantarum</name>
    <dbReference type="NCBI Taxonomy" id="326423"/>
    <lineage>
        <taxon>Bacteria</taxon>
        <taxon>Bacillati</taxon>
        <taxon>Bacillota</taxon>
        <taxon>Bacilli</taxon>
        <taxon>Bacillales</taxon>
        <taxon>Bacillaceae</taxon>
        <taxon>Bacillus</taxon>
        <taxon>Bacillus amyloliquefaciens group</taxon>
    </lineage>
</organism>
<dbReference type="EMBL" id="CP000560">
    <property type="protein sequence ID" value="ABS72498.1"/>
    <property type="molecule type" value="Genomic_DNA"/>
</dbReference>
<dbReference type="RefSeq" id="WP_004264660.1">
    <property type="nucleotide sequence ID" value="NC_009725.2"/>
</dbReference>
<dbReference type="SMR" id="A7Z0H2"/>
<dbReference type="GeneID" id="93079196"/>
<dbReference type="KEGG" id="bay:RBAM_000580"/>
<dbReference type="HOGENOM" id="CLU_103669_2_1_9"/>
<dbReference type="Proteomes" id="UP000001120">
    <property type="component" value="Chromosome"/>
</dbReference>
<dbReference type="GO" id="GO:0030436">
    <property type="term" value="P:asexual sporulation"/>
    <property type="evidence" value="ECO:0007669"/>
    <property type="project" value="UniProtKB-UniRule"/>
</dbReference>
<dbReference type="GO" id="GO:0000917">
    <property type="term" value="P:division septum assembly"/>
    <property type="evidence" value="ECO:0007669"/>
    <property type="project" value="UniProtKB-KW"/>
</dbReference>
<dbReference type="GO" id="GO:0030435">
    <property type="term" value="P:sporulation resulting in formation of a cellular spore"/>
    <property type="evidence" value="ECO:0007669"/>
    <property type="project" value="UniProtKB-KW"/>
</dbReference>
<dbReference type="FunFam" id="3.30.1120.40:FF:000001">
    <property type="entry name" value="Putative septation protein SpoVG"/>
    <property type="match status" value="1"/>
</dbReference>
<dbReference type="Gene3D" id="3.30.1120.40">
    <property type="entry name" value="Stage V sporulation protein G"/>
    <property type="match status" value="1"/>
</dbReference>
<dbReference type="HAMAP" id="MF_00819">
    <property type="entry name" value="SpoVG"/>
    <property type="match status" value="1"/>
</dbReference>
<dbReference type="InterPro" id="IPR007170">
    <property type="entry name" value="SpoVG"/>
</dbReference>
<dbReference type="InterPro" id="IPR036751">
    <property type="entry name" value="SpoVG_sf"/>
</dbReference>
<dbReference type="NCBIfam" id="NF009749">
    <property type="entry name" value="PRK13259.1"/>
    <property type="match status" value="1"/>
</dbReference>
<dbReference type="PANTHER" id="PTHR38429">
    <property type="entry name" value="SEPTATION PROTEIN SPOVG-RELATED"/>
    <property type="match status" value="1"/>
</dbReference>
<dbReference type="PANTHER" id="PTHR38429:SF1">
    <property type="entry name" value="SEPTATION PROTEIN SPOVG-RELATED"/>
    <property type="match status" value="1"/>
</dbReference>
<dbReference type="Pfam" id="PF04026">
    <property type="entry name" value="SpoVG"/>
    <property type="match status" value="1"/>
</dbReference>
<dbReference type="SUPFAM" id="SSF160537">
    <property type="entry name" value="SpoVG-like"/>
    <property type="match status" value="1"/>
</dbReference>
<protein>
    <recommendedName>
        <fullName evidence="1">Putative septation protein SpoVG</fullName>
    </recommendedName>
    <alternativeName>
        <fullName evidence="1">Stage V sporulation protein G</fullName>
    </alternativeName>
</protein>
<reference key="1">
    <citation type="journal article" date="2007" name="Nat. Biotechnol.">
        <title>Comparative analysis of the complete genome sequence of the plant growth-promoting bacterium Bacillus amyloliquefaciens FZB42.</title>
        <authorList>
            <person name="Chen X.H."/>
            <person name="Koumoutsi A."/>
            <person name="Scholz R."/>
            <person name="Eisenreich A."/>
            <person name="Schneider K."/>
            <person name="Heinemeyer I."/>
            <person name="Morgenstern B."/>
            <person name="Voss B."/>
            <person name="Hess W.R."/>
            <person name="Reva O."/>
            <person name="Junge H."/>
            <person name="Voigt B."/>
            <person name="Jungblut P.R."/>
            <person name="Vater J."/>
            <person name="Suessmuth R."/>
            <person name="Liesegang H."/>
            <person name="Strittmatter A."/>
            <person name="Gottschalk G."/>
            <person name="Borriss R."/>
        </authorList>
    </citation>
    <scope>NUCLEOTIDE SEQUENCE [LARGE SCALE GENOMIC DNA]</scope>
    <source>
        <strain>DSM 23117 / BGSC 10A6 / LMG 26770 / FZB42</strain>
    </source>
</reference>
<proteinExistence type="inferred from homology"/>
<feature type="chain" id="PRO_1000062421" description="Putative septation protein SpoVG">
    <location>
        <begin position="1"/>
        <end position="97"/>
    </location>
</feature>
<keyword id="KW-0131">Cell cycle</keyword>
<keyword id="KW-0132">Cell division</keyword>
<keyword id="KW-0717">Septation</keyword>
<keyword id="KW-0749">Sporulation</keyword>